<evidence type="ECO:0000250" key="1">
    <source>
        <dbReference type="UniProtKB" id="P42945"/>
    </source>
</evidence>
<evidence type="ECO:0000255" key="2"/>
<evidence type="ECO:0000305" key="3"/>
<evidence type="ECO:0000312" key="4">
    <source>
        <dbReference type="EMBL" id="EAU36647.1"/>
    </source>
</evidence>
<feature type="chain" id="PRO_0000308497" description="U3 small nucleolar RNA-associated protein 10">
    <location>
        <begin position="1"/>
        <end position="1801"/>
    </location>
</feature>
<feature type="transmembrane region" description="Helical" evidence="2">
    <location>
        <begin position="945"/>
        <end position="965"/>
    </location>
</feature>
<feature type="transmembrane region" description="Helical" evidence="2">
    <location>
        <begin position="1001"/>
        <end position="1021"/>
    </location>
</feature>
<feature type="repeat" description="HEAT 1" evidence="2">
    <location>
        <begin position="582"/>
        <end position="619"/>
    </location>
</feature>
<feature type="repeat" description="HEAT 2" evidence="2">
    <location>
        <begin position="1045"/>
        <end position="1082"/>
    </location>
</feature>
<feature type="repeat" description="HEAT 3" evidence="2">
    <location>
        <begin position="1252"/>
        <end position="1289"/>
    </location>
</feature>
<feature type="repeat" description="HEAT 4" evidence="2">
    <location>
        <begin position="1296"/>
        <end position="1334"/>
    </location>
</feature>
<feature type="repeat" description="HEAT 5" evidence="2">
    <location>
        <begin position="1757"/>
        <end position="1794"/>
    </location>
</feature>
<gene>
    <name evidence="1" type="primary">utp10</name>
    <name type="ORF">ATEG_03373</name>
</gene>
<sequence>MASSLAAQLSQIAANSTNQLNLKAQRIAHSHSLIFDKKVAGSQDFDTIYDICFEGFQELCQLDPRFAQFERTIFSPQSKTEERTEMNVAQNKELDTVLEAFLALVGGRLLLSPAVKAADWLIRRFRVHEYNTTATILTFLPYYSTPLFLNLLSILPEDLTPTFKVLLPYKKSLINPPRHPLVHSATTNKPFLAALNAYVIQASRQQSAHHALLSFWAGIFTEAVSGMLDASRSGRRGVEKVKHDDIVLSVLPILNDGLGMKDISELVIGCYMVCVVLAQKAALQDNVLDSLMEAIVASWTVETVSSGLICLSVLAQQKPEPTIPKRVFKAILRLENPIQQLSEISSQYKTSHLLLAIIAGCVDDLSKQEDTVRLDLLSLMFESQILGESETGQGMGIVLRAASSAHKDGVMSLNAQTHLADLVQHFTRSESLQPIFQKTIAESALDVSALEHNLQTVIESAQAPKALEDVEMDEAAPKQQEDEFPSLLQSLESEPLMKSSFLSAQSIPVFDRLAQAFALAIGSQEKLESFANLTVLGKSNATKSPQYLSFFVRVFSGSYPIGTRVTALNMLSSFLSDSPTDIDFQALVPFVLVALGDVSERIRREAAAVLAALGALYKKAKKDNPSVWASDSLYGQAKQSKGVNWLSGRDMSKIFERALLPGLEEYVLDPSHIGRVVEATLRGTLADSDASELKKPLRLALFSFLCSHVVQLPLFAPKLGLLDLLNRVEKAGGTTRTKELEPLLKMWRDLGVEKAKDICDKERISAAEMEAQVVKIVTPKEKDAIVLLLSIINPYSNSLSPSFVAAVFGRMKDIWAKIPEDRQEFAAERLFEVSLQESDSPLVDGCREVLRSVQVPGPVLVRFVKQIPVSVTDIESLGPAPKRRRTSQNNMVAMTVKDEAKLSKLMEKMTFILELVDGSKPEDHPELADGLFQTLAALHHFKSQIQSGMSYLLSLALGSLLAIVNKSRATAKPLFNTSVIRADLVVDCVRTTESPQVQNAALLLVAGLSVIAPELVLHSVMPIFTFMGSSVLRKDDEYSVSVIDQTIDQVVPALIQSLRNQKRDVVSGTSELLLSFTAAFEHIPSHRRLRLFHALITKLGTQDFLFAVLAMLANRYSMDKDVLILMTGLASDATAAVELCTYCKYLELVTDSLRPKPGISQVLLGIGSDDGREPQKVAVDLLRALAYLFRHSSIKSKMAKALAVEGGEESEQIRSYFSQILTQILTIGDTMQEMKAVSQASGEVLSALFGTLSLIDFLDTIEILLQRPGDELRRKVLRLLEGRLRQNPERDSPSQNRMLDFLPTLVTIVESSPDILLKHAAVACIDRITEKYGKKDPSKVIPASKAIAGQSCIGQEDDRIRIMGVLCLASMAEVLGQAMIPALPDALNRSLSLLEVSMEAGKENARLHDAVYSLFSALFVHLPYMISASHLDQILLLSFRSAGSEELEDESRQEALRLMARKADLAATFGVVNRNWTQAVAAGPEATKETLETLSLAIEKHPKSATMKNLPVLTEILFKAFDLRREQVALGSKAKFDADDLEEAEEIVNDVTIKMIYKLNDSTFRPIFTKLFDWATTGISKKDRHGDVSRLTTFYKFLEVFFGTLQSIVTGYASYIIENVVAVLGKASPSNQNTRTLWLSTLRMLRNAFEHDQDEFWQSPSHLNQISEPLISQLAHATTSSLANTVIAEAVPAITELAVAADSTDNHKELNTVLMRFLRPSAGPSGKAAGGENPHTRFAALKAEQSLTEQLGEEWLALLPEMLPYISELMEDEDENVEREVRRWVKQIEDVLGEKLDDMLT</sequence>
<comment type="function">
    <text evidence="1">Involved in nucleolar processing of pre-18S ribosomal RNA. Involved in ribosome biosynthesis (By similarity).</text>
</comment>
<comment type="subunit">
    <text evidence="1">Component of the ribosomal small subunit (SSU) processome.</text>
</comment>
<comment type="subcellular location">
    <subcellularLocation>
        <location evidence="1 2">Nucleus</location>
        <location evidence="1 2">Nucleolus</location>
    </subcellularLocation>
    <subcellularLocation>
        <location evidence="2">Membrane</location>
        <topology evidence="2">Multi-pass membrane protein</topology>
    </subcellularLocation>
</comment>
<comment type="similarity">
    <text evidence="3">Belongs to the HEATR1/UTP10 family.</text>
</comment>
<keyword id="KW-0472">Membrane</keyword>
<keyword id="KW-0539">Nucleus</keyword>
<keyword id="KW-1185">Reference proteome</keyword>
<keyword id="KW-0677">Repeat</keyword>
<keyword id="KW-0687">Ribonucleoprotein</keyword>
<keyword id="KW-0690">Ribosome biogenesis</keyword>
<keyword id="KW-0698">rRNA processing</keyword>
<keyword id="KW-0812">Transmembrane</keyword>
<keyword id="KW-1133">Transmembrane helix</keyword>
<protein>
    <recommendedName>
        <fullName>U3 small nucleolar RNA-associated protein 10</fullName>
    </recommendedName>
</protein>
<proteinExistence type="inferred from homology"/>
<accession>Q0CSG1</accession>
<dbReference type="EMBL" id="CH476597">
    <property type="protein sequence ID" value="EAU36647.1"/>
    <property type="molecule type" value="Genomic_DNA"/>
</dbReference>
<dbReference type="RefSeq" id="XP_001212551.1">
    <property type="nucleotide sequence ID" value="XM_001212551.1"/>
</dbReference>
<dbReference type="SMR" id="Q0CSG1"/>
<dbReference type="STRING" id="341663.Q0CSG1"/>
<dbReference type="EnsemblFungi" id="EAU36647">
    <property type="protein sequence ID" value="EAU36647"/>
    <property type="gene ID" value="ATEG_03373"/>
</dbReference>
<dbReference type="GeneID" id="4317536"/>
<dbReference type="VEuPathDB" id="FungiDB:ATEG_03373"/>
<dbReference type="eggNOG" id="KOG1837">
    <property type="taxonomic scope" value="Eukaryota"/>
</dbReference>
<dbReference type="HOGENOM" id="CLU_001128_3_1_1"/>
<dbReference type="OMA" id="NDVMWKQ"/>
<dbReference type="OrthoDB" id="31183at2759"/>
<dbReference type="Proteomes" id="UP000007963">
    <property type="component" value="Unassembled WGS sequence"/>
</dbReference>
<dbReference type="GO" id="GO:0030686">
    <property type="term" value="C:90S preribosome"/>
    <property type="evidence" value="ECO:0007669"/>
    <property type="project" value="TreeGrafter"/>
</dbReference>
<dbReference type="GO" id="GO:0016020">
    <property type="term" value="C:membrane"/>
    <property type="evidence" value="ECO:0007669"/>
    <property type="project" value="UniProtKB-SubCell"/>
</dbReference>
<dbReference type="GO" id="GO:0032040">
    <property type="term" value="C:small-subunit processome"/>
    <property type="evidence" value="ECO:0007669"/>
    <property type="project" value="TreeGrafter"/>
</dbReference>
<dbReference type="GO" id="GO:0034455">
    <property type="term" value="C:t-UTP complex"/>
    <property type="evidence" value="ECO:0007669"/>
    <property type="project" value="TreeGrafter"/>
</dbReference>
<dbReference type="GO" id="GO:0030515">
    <property type="term" value="F:snoRNA binding"/>
    <property type="evidence" value="ECO:0007669"/>
    <property type="project" value="TreeGrafter"/>
</dbReference>
<dbReference type="GO" id="GO:0000462">
    <property type="term" value="P:maturation of SSU-rRNA from tricistronic rRNA transcript (SSU-rRNA, 5.8S rRNA, LSU-rRNA)"/>
    <property type="evidence" value="ECO:0007669"/>
    <property type="project" value="TreeGrafter"/>
</dbReference>
<dbReference type="GO" id="GO:0045943">
    <property type="term" value="P:positive regulation of transcription by RNA polymerase I"/>
    <property type="evidence" value="ECO:0007669"/>
    <property type="project" value="TreeGrafter"/>
</dbReference>
<dbReference type="Gene3D" id="1.25.10.10">
    <property type="entry name" value="Leucine-rich Repeat Variant"/>
    <property type="match status" value="2"/>
</dbReference>
<dbReference type="InterPro" id="IPR011989">
    <property type="entry name" value="ARM-like"/>
</dbReference>
<dbReference type="InterPro" id="IPR016024">
    <property type="entry name" value="ARM-type_fold"/>
</dbReference>
<dbReference type="InterPro" id="IPR012954">
    <property type="entry name" value="BP28_C_dom"/>
</dbReference>
<dbReference type="InterPro" id="IPR021133">
    <property type="entry name" value="HEAT_type_2"/>
</dbReference>
<dbReference type="InterPro" id="IPR056473">
    <property type="entry name" value="HEAT_Utp10/HEAT1"/>
</dbReference>
<dbReference type="InterPro" id="IPR022125">
    <property type="entry name" value="U3snoRNP10_N"/>
</dbReference>
<dbReference type="InterPro" id="IPR040191">
    <property type="entry name" value="UTP10"/>
</dbReference>
<dbReference type="PANTHER" id="PTHR13457">
    <property type="entry name" value="BAP28"/>
    <property type="match status" value="1"/>
</dbReference>
<dbReference type="PANTHER" id="PTHR13457:SF1">
    <property type="entry name" value="HEAT REPEAT-CONTAINING PROTEIN 1"/>
    <property type="match status" value="1"/>
</dbReference>
<dbReference type="Pfam" id="PF08146">
    <property type="entry name" value="BP28CT"/>
    <property type="match status" value="1"/>
</dbReference>
<dbReference type="Pfam" id="PF23243">
    <property type="entry name" value="HEAT_HEATR1"/>
    <property type="match status" value="1"/>
</dbReference>
<dbReference type="Pfam" id="PF12397">
    <property type="entry name" value="U3snoRNP10"/>
    <property type="match status" value="1"/>
</dbReference>
<dbReference type="SMART" id="SM01036">
    <property type="entry name" value="BP28CT"/>
    <property type="match status" value="1"/>
</dbReference>
<dbReference type="SUPFAM" id="SSF48371">
    <property type="entry name" value="ARM repeat"/>
    <property type="match status" value="2"/>
</dbReference>
<dbReference type="PROSITE" id="PS50077">
    <property type="entry name" value="HEAT_REPEAT"/>
    <property type="match status" value="1"/>
</dbReference>
<name>UTP10_ASPTN</name>
<organism>
    <name type="scientific">Aspergillus terreus (strain NIH 2624 / FGSC A1156)</name>
    <dbReference type="NCBI Taxonomy" id="341663"/>
    <lineage>
        <taxon>Eukaryota</taxon>
        <taxon>Fungi</taxon>
        <taxon>Dikarya</taxon>
        <taxon>Ascomycota</taxon>
        <taxon>Pezizomycotina</taxon>
        <taxon>Eurotiomycetes</taxon>
        <taxon>Eurotiomycetidae</taxon>
        <taxon>Eurotiales</taxon>
        <taxon>Aspergillaceae</taxon>
        <taxon>Aspergillus</taxon>
        <taxon>Aspergillus subgen. Circumdati</taxon>
    </lineage>
</organism>
<reference evidence="4" key="1">
    <citation type="submission" date="2005-09" db="EMBL/GenBank/DDBJ databases">
        <title>Annotation of the Aspergillus terreus NIH2624 genome.</title>
        <authorList>
            <person name="Birren B.W."/>
            <person name="Lander E.S."/>
            <person name="Galagan J.E."/>
            <person name="Nusbaum C."/>
            <person name="Devon K."/>
            <person name="Henn M."/>
            <person name="Ma L.-J."/>
            <person name="Jaffe D.B."/>
            <person name="Butler J."/>
            <person name="Alvarez P."/>
            <person name="Gnerre S."/>
            <person name="Grabherr M."/>
            <person name="Kleber M."/>
            <person name="Mauceli E.W."/>
            <person name="Brockman W."/>
            <person name="Rounsley S."/>
            <person name="Young S.K."/>
            <person name="LaButti K."/>
            <person name="Pushparaj V."/>
            <person name="DeCaprio D."/>
            <person name="Crawford M."/>
            <person name="Koehrsen M."/>
            <person name="Engels R."/>
            <person name="Montgomery P."/>
            <person name="Pearson M."/>
            <person name="Howarth C."/>
            <person name="Larson L."/>
            <person name="Luoma S."/>
            <person name="White J."/>
            <person name="Alvarado L."/>
            <person name="Kodira C.D."/>
            <person name="Zeng Q."/>
            <person name="Oleary S."/>
            <person name="Yandava C."/>
            <person name="Denning D.W."/>
            <person name="Nierman W.C."/>
            <person name="Milne T."/>
            <person name="Madden K."/>
        </authorList>
    </citation>
    <scope>NUCLEOTIDE SEQUENCE [LARGE SCALE GENOMIC DNA]</scope>
    <source>
        <strain>NIH 2624 / FGSC A1156</strain>
    </source>
</reference>